<comment type="function">
    <text evidence="1">This protein binds to the 23S rRNA, and is important in its secondary structure. It is located near the subunit interface in the base of the L7/L12 stalk, and near the tRNA binding site of the peptidyltransferase center.</text>
</comment>
<comment type="subunit">
    <text evidence="1">Part of the 50S ribosomal subunit.</text>
</comment>
<comment type="similarity">
    <text evidence="1">Belongs to the universal ribosomal protein uL6 family.</text>
</comment>
<gene>
    <name evidence="1" type="primary">rplF</name>
    <name type="ordered locus">TP_0204</name>
</gene>
<dbReference type="EMBL" id="AE000520">
    <property type="protein sequence ID" value="AAC65188.1"/>
    <property type="molecule type" value="Genomic_DNA"/>
</dbReference>
<dbReference type="PIR" id="F71356">
    <property type="entry name" value="F71356"/>
</dbReference>
<dbReference type="RefSeq" id="WP_010881651.1">
    <property type="nucleotide sequence ID" value="NC_021490.2"/>
</dbReference>
<dbReference type="SMR" id="O83234"/>
<dbReference type="STRING" id="243276.TP_0204"/>
<dbReference type="EnsemblBacteria" id="AAC65188">
    <property type="protein sequence ID" value="AAC65188"/>
    <property type="gene ID" value="TP_0204"/>
</dbReference>
<dbReference type="GeneID" id="93875991"/>
<dbReference type="KEGG" id="tpa:TP_0204"/>
<dbReference type="KEGG" id="tpw:TPANIC_0204"/>
<dbReference type="eggNOG" id="COG0097">
    <property type="taxonomic scope" value="Bacteria"/>
</dbReference>
<dbReference type="HOGENOM" id="CLU_065464_1_2_12"/>
<dbReference type="OrthoDB" id="9805007at2"/>
<dbReference type="Proteomes" id="UP000000811">
    <property type="component" value="Chromosome"/>
</dbReference>
<dbReference type="GO" id="GO:1990904">
    <property type="term" value="C:ribonucleoprotein complex"/>
    <property type="evidence" value="ECO:0007669"/>
    <property type="project" value="UniProtKB-KW"/>
</dbReference>
<dbReference type="GO" id="GO:0005840">
    <property type="term" value="C:ribosome"/>
    <property type="evidence" value="ECO:0007669"/>
    <property type="project" value="UniProtKB-KW"/>
</dbReference>
<dbReference type="GO" id="GO:0019843">
    <property type="term" value="F:rRNA binding"/>
    <property type="evidence" value="ECO:0007669"/>
    <property type="project" value="UniProtKB-UniRule"/>
</dbReference>
<dbReference type="GO" id="GO:0003735">
    <property type="term" value="F:structural constituent of ribosome"/>
    <property type="evidence" value="ECO:0007669"/>
    <property type="project" value="InterPro"/>
</dbReference>
<dbReference type="GO" id="GO:0002181">
    <property type="term" value="P:cytoplasmic translation"/>
    <property type="evidence" value="ECO:0007669"/>
    <property type="project" value="TreeGrafter"/>
</dbReference>
<dbReference type="FunFam" id="3.90.930.12:FF:000002">
    <property type="entry name" value="50S ribosomal protein L6"/>
    <property type="match status" value="1"/>
</dbReference>
<dbReference type="Gene3D" id="3.90.930.12">
    <property type="entry name" value="Ribosomal protein L6, alpha-beta domain"/>
    <property type="match status" value="2"/>
</dbReference>
<dbReference type="HAMAP" id="MF_01365_B">
    <property type="entry name" value="Ribosomal_uL6_B"/>
    <property type="match status" value="1"/>
</dbReference>
<dbReference type="InterPro" id="IPR000702">
    <property type="entry name" value="Ribosomal_uL6-like"/>
</dbReference>
<dbReference type="InterPro" id="IPR036789">
    <property type="entry name" value="Ribosomal_uL6-like_a/b-dom_sf"/>
</dbReference>
<dbReference type="InterPro" id="IPR020040">
    <property type="entry name" value="Ribosomal_uL6_a/b-dom"/>
</dbReference>
<dbReference type="InterPro" id="IPR019906">
    <property type="entry name" value="Ribosomal_uL6_bac-type"/>
</dbReference>
<dbReference type="InterPro" id="IPR002358">
    <property type="entry name" value="Ribosomal_uL6_CS"/>
</dbReference>
<dbReference type="NCBIfam" id="TIGR03654">
    <property type="entry name" value="L6_bact"/>
    <property type="match status" value="1"/>
</dbReference>
<dbReference type="PANTHER" id="PTHR11655">
    <property type="entry name" value="60S/50S RIBOSOMAL PROTEIN L6/L9"/>
    <property type="match status" value="1"/>
</dbReference>
<dbReference type="PANTHER" id="PTHR11655:SF14">
    <property type="entry name" value="LARGE RIBOSOMAL SUBUNIT PROTEIN UL6M"/>
    <property type="match status" value="1"/>
</dbReference>
<dbReference type="Pfam" id="PF00347">
    <property type="entry name" value="Ribosomal_L6"/>
    <property type="match status" value="2"/>
</dbReference>
<dbReference type="PIRSF" id="PIRSF002162">
    <property type="entry name" value="Ribosomal_L6"/>
    <property type="match status" value="1"/>
</dbReference>
<dbReference type="PRINTS" id="PR00059">
    <property type="entry name" value="RIBOSOMALL6"/>
</dbReference>
<dbReference type="SUPFAM" id="SSF56053">
    <property type="entry name" value="Ribosomal protein L6"/>
    <property type="match status" value="2"/>
</dbReference>
<dbReference type="PROSITE" id="PS00525">
    <property type="entry name" value="RIBOSOMAL_L6_1"/>
    <property type="match status" value="1"/>
</dbReference>
<organism>
    <name type="scientific">Treponema pallidum (strain Nichols)</name>
    <dbReference type="NCBI Taxonomy" id="243276"/>
    <lineage>
        <taxon>Bacteria</taxon>
        <taxon>Pseudomonadati</taxon>
        <taxon>Spirochaetota</taxon>
        <taxon>Spirochaetia</taxon>
        <taxon>Spirochaetales</taxon>
        <taxon>Treponemataceae</taxon>
        <taxon>Treponema</taxon>
    </lineage>
</organism>
<keyword id="KW-1185">Reference proteome</keyword>
<keyword id="KW-0687">Ribonucleoprotein</keyword>
<keyword id="KW-0689">Ribosomal protein</keyword>
<keyword id="KW-0694">RNA-binding</keyword>
<keyword id="KW-0699">rRNA-binding</keyword>
<reference key="1">
    <citation type="journal article" date="1998" name="Science">
        <title>Complete genome sequence of Treponema pallidum, the syphilis spirochete.</title>
        <authorList>
            <person name="Fraser C.M."/>
            <person name="Norris S.J."/>
            <person name="Weinstock G.M."/>
            <person name="White O."/>
            <person name="Sutton G.G."/>
            <person name="Dodson R.J."/>
            <person name="Gwinn M.L."/>
            <person name="Hickey E.K."/>
            <person name="Clayton R.A."/>
            <person name="Ketchum K.A."/>
            <person name="Sodergren E."/>
            <person name="Hardham J.M."/>
            <person name="McLeod M.P."/>
            <person name="Salzberg S.L."/>
            <person name="Peterson J.D."/>
            <person name="Khalak H.G."/>
            <person name="Richardson D.L."/>
            <person name="Howell J.K."/>
            <person name="Chidambaram M."/>
            <person name="Utterback T.R."/>
            <person name="McDonald L.A."/>
            <person name="Artiach P."/>
            <person name="Bowman C."/>
            <person name="Cotton M.D."/>
            <person name="Fujii C."/>
            <person name="Garland S.A."/>
            <person name="Hatch B."/>
            <person name="Horst K."/>
            <person name="Roberts K.M."/>
            <person name="Sandusky M."/>
            <person name="Weidman J.F."/>
            <person name="Smith H.O."/>
            <person name="Venter J.C."/>
        </authorList>
    </citation>
    <scope>NUCLEOTIDE SEQUENCE [LARGE SCALE GENOMIC DNA]</scope>
    <source>
        <strain>Nichols</strain>
    </source>
</reference>
<evidence type="ECO:0000255" key="1">
    <source>
        <dbReference type="HAMAP-Rule" id="MF_01365"/>
    </source>
</evidence>
<evidence type="ECO:0000305" key="2"/>
<protein>
    <recommendedName>
        <fullName evidence="1">Large ribosomal subunit protein uL6</fullName>
    </recommendedName>
    <alternativeName>
        <fullName evidence="2">50S ribosomal protein L6</fullName>
    </alternativeName>
</protein>
<accession>O83234</accession>
<sequence length="179" mass="19425">MSRIGKVPVSVPGGVHVRVSSGVVEVEGPKGVLSCAFLPVVTVRVEQEYVIVARCDDSKRARACHGLYRKLLSNMVVGVSEGFSKTLVITGIGYRAEVQGRVLVMALGYSNDFTVLIPSGIEVRVESSTRVIVSGVSKERVGEFAAQLRRLRLPEAYKGKGIRYDYETIVRKVGKSGVK</sequence>
<name>RL6_TREPA</name>
<proteinExistence type="inferred from homology"/>
<feature type="chain" id="PRO_0000131074" description="Large ribosomal subunit protein uL6">
    <location>
        <begin position="1"/>
        <end position="179"/>
    </location>
</feature>